<comment type="function">
    <text>Has a stimulative effect on the contraction of gut muscles.</text>
</comment>
<comment type="similarity">
    <text evidence="2">To insects allatotropin.</text>
</comment>
<sequence length="14" mass="1522">GFRDGSADRISHGF</sequence>
<evidence type="ECO:0000269" key="1">
    <source>
    </source>
</evidence>
<evidence type="ECO:0000305" key="2"/>
<organism>
    <name type="scientific">Amynthas vittatus</name>
    <name type="common">Earthworm</name>
    <name type="synonym">Pheretima vittata</name>
    <dbReference type="NCBI Taxonomy" id="506674"/>
    <lineage>
        <taxon>Eukaryota</taxon>
        <taxon>Metazoa</taxon>
        <taxon>Spiralia</taxon>
        <taxon>Lophotrochozoa</taxon>
        <taxon>Annelida</taxon>
        <taxon>Clitellata</taxon>
        <taxon>Oligochaeta</taxon>
        <taxon>Crassiclitellata</taxon>
        <taxon>Megascolecida</taxon>
        <taxon>Megascolecidae</taxon>
        <taxon>Amynthas</taxon>
    </lineage>
</organism>
<feature type="peptide" id="PRO_0000044174" description="Myoactive tetradecapeptide">
    <location>
        <begin position="1"/>
        <end position="14"/>
    </location>
</feature>
<feature type="modified residue" description="Phenylalanine amide" evidence="1">
    <location>
        <position position="14"/>
    </location>
</feature>
<reference key="1">
    <citation type="journal article" date="1995" name="Peptides">
        <title>A novel gut tetradecapeptide isolated from the earthworm, Eisenia foetida.</title>
        <authorList>
            <person name="Ukena K."/>
            <person name="Oumi T."/>
            <person name="Matsushima O."/>
            <person name="Ikeda T."/>
            <person name="Fujita T."/>
            <person name="Minakata H."/>
            <person name="Nomoto K."/>
        </authorList>
    </citation>
    <scope>PROTEIN SEQUENCE</scope>
    <scope>AMIDATION AT PHE-14</scope>
    <scope>SYNTHESIS</scope>
    <source>
        <tissue>Gut</tissue>
    </source>
</reference>
<dbReference type="GO" id="GO:0005576">
    <property type="term" value="C:extracellular region"/>
    <property type="evidence" value="ECO:0007669"/>
    <property type="project" value="InterPro"/>
</dbReference>
<dbReference type="GO" id="GO:0005184">
    <property type="term" value="F:neuropeptide hormone activity"/>
    <property type="evidence" value="ECO:0007669"/>
    <property type="project" value="InterPro"/>
</dbReference>
<dbReference type="GO" id="GO:0007218">
    <property type="term" value="P:neuropeptide signaling pathway"/>
    <property type="evidence" value="ECO:0007669"/>
    <property type="project" value="UniProtKB-KW"/>
</dbReference>
<dbReference type="InterPro" id="IPR012619">
    <property type="entry name" value="Tetradecapep"/>
</dbReference>
<dbReference type="Pfam" id="PF08187">
    <property type="entry name" value="Tetradecapep"/>
    <property type="match status" value="1"/>
</dbReference>
<name>MY14_AMYVI</name>
<keyword id="KW-0027">Amidation</keyword>
<keyword id="KW-0903">Direct protein sequencing</keyword>
<keyword id="KW-0527">Neuropeptide</keyword>
<accession>P46980</accession>
<protein>
    <recommendedName>
        <fullName>Myoactive tetradecapeptide</fullName>
    </recommendedName>
    <alternativeName>
        <fullName>PTP</fullName>
    </alternativeName>
</protein>
<proteinExistence type="evidence at protein level"/>